<dbReference type="EMBL" id="AF394561">
    <property type="protein sequence ID" value="AAL24497.1"/>
    <property type="status" value="ALT_INIT"/>
    <property type="molecule type" value="Genomic_DNA"/>
</dbReference>
<dbReference type="EMBL" id="AY100692">
    <property type="protein sequence ID" value="AAM52408.1"/>
    <property type="status" value="ALT_INIT"/>
    <property type="molecule type" value="mRNA"/>
</dbReference>
<dbReference type="EMBL" id="DP000011">
    <property type="protein sequence ID" value="ABA98863.1"/>
    <property type="molecule type" value="Genomic_DNA"/>
</dbReference>
<dbReference type="EMBL" id="AP008218">
    <property type="protein sequence ID" value="BAF29984.1"/>
    <property type="molecule type" value="Genomic_DNA"/>
</dbReference>
<dbReference type="EMBL" id="AP014968">
    <property type="protein sequence ID" value="BAT17537.1"/>
    <property type="molecule type" value="Genomic_DNA"/>
</dbReference>
<dbReference type="EMBL" id="AK071328">
    <property type="protein sequence ID" value="BAG92434.1"/>
    <property type="molecule type" value="mRNA"/>
</dbReference>
<dbReference type="RefSeq" id="XP_015619553.1">
    <property type="nucleotide sequence ID" value="XM_015764067.1"/>
</dbReference>
<dbReference type="SMR" id="Q2QP13"/>
<dbReference type="STRING" id="39947.Q2QP13"/>
<dbReference type="GlyCosmos" id="Q2QP13">
    <property type="glycosylation" value="1 site, No reported glycans"/>
</dbReference>
<dbReference type="PaxDb" id="39947-Q2QP13"/>
<dbReference type="EnsemblPlants" id="Os12t0546800-01">
    <property type="protein sequence ID" value="Os12t0546800-01"/>
    <property type="gene ID" value="Os12g0546800"/>
</dbReference>
<dbReference type="Gramene" id="Os12t0546800-01">
    <property type="protein sequence ID" value="Os12t0546800-01"/>
    <property type="gene ID" value="Os12g0546800"/>
</dbReference>
<dbReference type="KEGG" id="dosa:Os12g0546800"/>
<dbReference type="eggNOG" id="ENOG502QR06">
    <property type="taxonomic scope" value="Eukaryota"/>
</dbReference>
<dbReference type="HOGENOM" id="CLU_027462_0_2_1"/>
<dbReference type="InParanoid" id="Q2QP13"/>
<dbReference type="OMA" id="CGYKDAD"/>
<dbReference type="OrthoDB" id="658711at2759"/>
<dbReference type="Proteomes" id="UP000000763">
    <property type="component" value="Chromosome 12"/>
</dbReference>
<dbReference type="Proteomes" id="UP000059680">
    <property type="component" value="Chromosome 12"/>
</dbReference>
<dbReference type="GO" id="GO:0005576">
    <property type="term" value="C:extracellular region"/>
    <property type="evidence" value="ECO:0007669"/>
    <property type="project" value="UniProtKB-KW"/>
</dbReference>
<dbReference type="GO" id="GO:0016020">
    <property type="term" value="C:membrane"/>
    <property type="evidence" value="ECO:0007669"/>
    <property type="project" value="UniProtKB-SubCell"/>
</dbReference>
<dbReference type="GO" id="GO:0009828">
    <property type="term" value="P:plant-type cell wall loosening"/>
    <property type="evidence" value="ECO:0000250"/>
    <property type="project" value="UniProtKB"/>
</dbReference>
<dbReference type="CDD" id="cd22274">
    <property type="entry name" value="DPBB_EXPA_N"/>
    <property type="match status" value="1"/>
</dbReference>
<dbReference type="Gene3D" id="2.60.40.760">
    <property type="entry name" value="Expansin, cellulose-binding-like domain"/>
    <property type="match status" value="1"/>
</dbReference>
<dbReference type="Gene3D" id="2.40.40.10">
    <property type="entry name" value="RlpA-like domain"/>
    <property type="match status" value="1"/>
</dbReference>
<dbReference type="InterPro" id="IPR007118">
    <property type="entry name" value="Expan_Lol_pI"/>
</dbReference>
<dbReference type="InterPro" id="IPR002963">
    <property type="entry name" value="Expansin"/>
</dbReference>
<dbReference type="InterPro" id="IPR007112">
    <property type="entry name" value="Expansin/allergen_DPBB_dom"/>
</dbReference>
<dbReference type="InterPro" id="IPR007117">
    <property type="entry name" value="Expansin_CBD"/>
</dbReference>
<dbReference type="InterPro" id="IPR036749">
    <property type="entry name" value="Expansin_CBD_sf"/>
</dbReference>
<dbReference type="InterPro" id="IPR009009">
    <property type="entry name" value="RlpA-like_DPBB"/>
</dbReference>
<dbReference type="InterPro" id="IPR036908">
    <property type="entry name" value="RlpA-like_sf"/>
</dbReference>
<dbReference type="PANTHER" id="PTHR31867">
    <property type="entry name" value="EXPANSIN-A15"/>
    <property type="match status" value="1"/>
</dbReference>
<dbReference type="Pfam" id="PF03330">
    <property type="entry name" value="DPBB_1"/>
    <property type="match status" value="1"/>
</dbReference>
<dbReference type="Pfam" id="PF01357">
    <property type="entry name" value="Expansin_C"/>
    <property type="match status" value="1"/>
</dbReference>
<dbReference type="PRINTS" id="PR01226">
    <property type="entry name" value="EXPANSIN"/>
</dbReference>
<dbReference type="PRINTS" id="PR01225">
    <property type="entry name" value="EXPANSNFAMLY"/>
</dbReference>
<dbReference type="SMART" id="SM00837">
    <property type="entry name" value="DPBB_1"/>
    <property type="match status" value="1"/>
</dbReference>
<dbReference type="SUPFAM" id="SSF50685">
    <property type="entry name" value="Barwin-like endoglucanases"/>
    <property type="match status" value="1"/>
</dbReference>
<dbReference type="SUPFAM" id="SSF49590">
    <property type="entry name" value="PHL pollen allergen"/>
    <property type="match status" value="1"/>
</dbReference>
<dbReference type="PROSITE" id="PS50843">
    <property type="entry name" value="EXPANSIN_CBD"/>
    <property type="match status" value="1"/>
</dbReference>
<dbReference type="PROSITE" id="PS50842">
    <property type="entry name" value="EXPANSIN_EG45"/>
    <property type="match status" value="1"/>
</dbReference>
<gene>
    <name type="primary">EXPA26</name>
    <name type="synonym">EXP26</name>
    <name type="ordered locus">Os12g0546800</name>
    <name type="ordered locus">LOC_Os12g36040</name>
</gene>
<protein>
    <recommendedName>
        <fullName>Expansin-A26</fullName>
    </recommendedName>
    <alternativeName>
        <fullName>Alpha-expansin-26</fullName>
    </alternativeName>
    <alternativeName>
        <fullName>OsEXP26</fullName>
    </alternativeName>
    <alternativeName>
        <fullName>OsEXPA26</fullName>
    </alternativeName>
    <alternativeName>
        <fullName>OsaEXPa1.29</fullName>
    </alternativeName>
</protein>
<evidence type="ECO:0000250" key="1"/>
<evidence type="ECO:0000255" key="2"/>
<evidence type="ECO:0000255" key="3">
    <source>
        <dbReference type="PROSITE-ProRule" id="PRU00078"/>
    </source>
</evidence>
<evidence type="ECO:0000255" key="4">
    <source>
        <dbReference type="PROSITE-ProRule" id="PRU00079"/>
    </source>
</evidence>
<evidence type="ECO:0000256" key="5">
    <source>
        <dbReference type="SAM" id="MobiDB-lite"/>
    </source>
</evidence>
<evidence type="ECO:0000269" key="6">
    <source>
    </source>
</evidence>
<evidence type="ECO:0000305" key="7"/>
<organism>
    <name type="scientific">Oryza sativa subsp. japonica</name>
    <name type="common">Rice</name>
    <dbReference type="NCBI Taxonomy" id="39947"/>
    <lineage>
        <taxon>Eukaryota</taxon>
        <taxon>Viridiplantae</taxon>
        <taxon>Streptophyta</taxon>
        <taxon>Embryophyta</taxon>
        <taxon>Tracheophyta</taxon>
        <taxon>Spermatophyta</taxon>
        <taxon>Magnoliopsida</taxon>
        <taxon>Liliopsida</taxon>
        <taxon>Poales</taxon>
        <taxon>Poaceae</taxon>
        <taxon>BOP clade</taxon>
        <taxon>Oryzoideae</taxon>
        <taxon>Oryzeae</taxon>
        <taxon>Oryzinae</taxon>
        <taxon>Oryza</taxon>
        <taxon>Oryza sativa</taxon>
    </lineage>
</organism>
<accession>Q2QP13</accession>
<accession>B7EJ87</accession>
<accession>Q8H276</accession>
<accession>Q946H6</accession>
<sequence length="290" mass="30047">MDTTTTMAPLPLLTTTSLLLFFFLASSFAADVVVAGGGGGGGGYDGGGDGEGGGGGDGEGGGGGGGAKMPHVNHGRYKCGPWVDGHATFYGGRDASGTTEGGACGYKDADGYGAMTAAVSPALFDNGAGCGACYELKGDSGKTVVVTATNQAPPPVNGMKGEHFDLTMPAFLSIAEEKLGVVPVSYRKVACVRQGGIKYTITGNPSYNMVMVKNVGGAGDVVKLTVKGTKRVKWTPLQRSWGQLWKTEANLTGESLTFRVMTGDHRKATSWRVAPRDWTYDNTYQAKKNF</sequence>
<comment type="function">
    <text evidence="1">May cause loosening and extension of plant cell walls by disrupting non-covalent bonding between cellulose microfibrils and matrix glucans. No enzymatic activity has been found. May be required for rapid internodal elongation in deepwater rice during submergence (By similarity).</text>
</comment>
<comment type="subcellular location">
    <subcellularLocation>
        <location evidence="1">Secreted</location>
        <location evidence="1">Cell wall</location>
    </subcellularLocation>
    <subcellularLocation>
        <location evidence="1">Membrane</location>
        <topology evidence="1">Peripheral membrane protein</topology>
    </subcellularLocation>
</comment>
<comment type="tissue specificity">
    <text evidence="6">Expressed in flowers.</text>
</comment>
<comment type="similarity">
    <text evidence="7">Belongs to the expansin family. Expansin A subfamily.</text>
</comment>
<comment type="sequence caution" evidence="7">
    <conflict type="erroneous initiation">
        <sequence resource="EMBL-CDS" id="AAL24497"/>
    </conflict>
</comment>
<comment type="sequence caution" evidence="7">
    <conflict type="erroneous initiation">
        <sequence resource="EMBL-CDS" id="AAM52408"/>
    </conflict>
</comment>
<comment type="online information" name="EXPANSIN homepage">
    <link uri="https://www.dept.psu.edu/biology/groups/expansins/index.htm"/>
</comment>
<reference key="1">
    <citation type="journal article" date="2002" name="Plant Physiol.">
        <title>Expression of alpha-expansin and expansin-like genes in deepwater rice.</title>
        <authorList>
            <person name="Lee Y."/>
            <person name="Kende H."/>
        </authorList>
    </citation>
    <scope>NUCLEOTIDE SEQUENCE [GENOMIC DNA / MRNA]</scope>
</reference>
<reference key="2">
    <citation type="journal article" date="2005" name="BMC Biol.">
        <title>The sequence of rice chromosomes 11 and 12, rich in disease resistance genes and recent gene duplications.</title>
        <authorList>
            <consortium name="The rice chromosomes 11 and 12 sequencing consortia"/>
        </authorList>
    </citation>
    <scope>NUCLEOTIDE SEQUENCE [LARGE SCALE GENOMIC DNA]</scope>
    <source>
        <strain>cv. Nipponbare</strain>
    </source>
</reference>
<reference key="3">
    <citation type="journal article" date="2005" name="Nature">
        <title>The map-based sequence of the rice genome.</title>
        <authorList>
            <consortium name="International rice genome sequencing project (IRGSP)"/>
        </authorList>
    </citation>
    <scope>NUCLEOTIDE SEQUENCE [LARGE SCALE GENOMIC DNA]</scope>
    <source>
        <strain>cv. Nipponbare</strain>
    </source>
</reference>
<reference key="4">
    <citation type="journal article" date="2008" name="Nucleic Acids Res.">
        <title>The rice annotation project database (RAP-DB): 2008 update.</title>
        <authorList>
            <consortium name="The rice annotation project (RAP)"/>
        </authorList>
    </citation>
    <scope>GENOME REANNOTATION</scope>
    <source>
        <strain>cv. Nipponbare</strain>
    </source>
</reference>
<reference key="5">
    <citation type="journal article" date="2013" name="Rice">
        <title>Improvement of the Oryza sativa Nipponbare reference genome using next generation sequence and optical map data.</title>
        <authorList>
            <person name="Kawahara Y."/>
            <person name="de la Bastide M."/>
            <person name="Hamilton J.P."/>
            <person name="Kanamori H."/>
            <person name="McCombie W.R."/>
            <person name="Ouyang S."/>
            <person name="Schwartz D.C."/>
            <person name="Tanaka T."/>
            <person name="Wu J."/>
            <person name="Zhou S."/>
            <person name="Childs K.L."/>
            <person name="Davidson R.M."/>
            <person name="Lin H."/>
            <person name="Quesada-Ocampo L."/>
            <person name="Vaillancourt B."/>
            <person name="Sakai H."/>
            <person name="Lee S.S."/>
            <person name="Kim J."/>
            <person name="Numa H."/>
            <person name="Itoh T."/>
            <person name="Buell C.R."/>
            <person name="Matsumoto T."/>
        </authorList>
    </citation>
    <scope>GENOME REANNOTATION</scope>
    <source>
        <strain>cv. Nipponbare</strain>
    </source>
</reference>
<reference key="6">
    <citation type="journal article" date="2003" name="Science">
        <title>Collection, mapping, and annotation of over 28,000 cDNA clones from japonica rice.</title>
        <authorList>
            <consortium name="The rice full-length cDNA consortium"/>
        </authorList>
    </citation>
    <scope>NUCLEOTIDE SEQUENCE [LARGE SCALE MRNA]</scope>
    <source>
        <strain>cv. Nipponbare</strain>
    </source>
</reference>
<reference key="7">
    <citation type="journal article" date="2004" name="Plant Mol. Biol.">
        <title>Nomenclature for members of the expansin superfamily of genes and proteins.</title>
        <authorList>
            <person name="Kende H."/>
            <person name="Bradford K.J."/>
            <person name="Brummell D.A."/>
            <person name="Cho H.-T."/>
            <person name="Cosgrove D.J."/>
            <person name="Fleming A.J."/>
            <person name="Gehring C."/>
            <person name="Lee Y."/>
            <person name="McQueen-Mason S.J."/>
            <person name="Rose J.K.C."/>
            <person name="Voesenek L.A.C."/>
        </authorList>
    </citation>
    <scope>NOMENCLATURE</scope>
</reference>
<reference key="8">
    <citation type="journal article" date="2005" name="Mol. Cells">
        <title>Characterization and transcriptional expression of the alpha-expansin gene family in rice.</title>
        <authorList>
            <person name="Shin J.-H."/>
            <person name="Jeong D.-H."/>
            <person name="Park M.C."/>
            <person name="An G."/>
        </authorList>
    </citation>
    <scope>TISSUE SPECIFICITY</scope>
</reference>
<proteinExistence type="evidence at transcript level"/>
<feature type="signal peptide" evidence="2">
    <location>
        <begin position="1"/>
        <end position="29"/>
    </location>
</feature>
<feature type="chain" id="PRO_0000252005" description="Expansin-A26">
    <location>
        <begin position="30"/>
        <end position="290"/>
    </location>
</feature>
<feature type="domain" description="Expansin-like EG45" evidence="4">
    <location>
        <begin position="101"/>
        <end position="196"/>
    </location>
</feature>
<feature type="domain" description="Expansin-like CBD" evidence="3">
    <location>
        <begin position="206"/>
        <end position="286"/>
    </location>
</feature>
<feature type="region of interest" description="Disordered" evidence="5">
    <location>
        <begin position="45"/>
        <end position="67"/>
    </location>
</feature>
<feature type="glycosylation site" description="N-linked (GlcNAc...) asparagine" evidence="2">
    <location>
        <position position="250"/>
    </location>
</feature>
<name>EXP26_ORYSJ</name>
<keyword id="KW-0134">Cell wall</keyword>
<keyword id="KW-0961">Cell wall biogenesis/degradation</keyword>
<keyword id="KW-0325">Glycoprotein</keyword>
<keyword id="KW-0472">Membrane</keyword>
<keyword id="KW-1185">Reference proteome</keyword>
<keyword id="KW-0964">Secreted</keyword>
<keyword id="KW-0732">Signal</keyword>